<accession>Q5LRJ6</accession>
<name>SYC_RUEPO</name>
<sequence length="465" mass="52231">MTTIKLHNTRTRTKEEFVPIDPDNVRMYVCGPTVYDRAHLGNGRPVVVFDVLYRLLRHVYGADHVTYVRNFTDVDDKINARAAERGRPIGDITAETTQWFLDDMGALGALEPDHMPRATQYIPQMVAMIEELVAKGHAYEAEGHVLFAVDSWKEHYGKLSGRSVDDMIAGARVEVAPYKKNPMDFVLWKPSTPDLPGWDSPWGRGRPGWHIECSAMSYELLGESFDIHGGGNDLMFPHHENEIAQSCCAHPEGHFANFWLHNEMLQVEGKKMSKSLGNFFTVRDLLDQGIPGEVIRFVFLSTHYRKPMDWTEKKAKEAEATLRKWWRLTAPLDEMEIKPSPQFIDALTDDLNTPGAIAELHRLAKEKDYAALEAGLEMLGLQETVNFGVASFGFSTSVEVLEAANDLARRWMAYRDAKNFEEADRLKKSALLAGVDLSVSKEGGIQVPSATINGSPTVDELEALK</sequence>
<proteinExistence type="inferred from homology"/>
<protein>
    <recommendedName>
        <fullName evidence="1">Cysteine--tRNA ligase</fullName>
        <ecNumber evidence="1">6.1.1.16</ecNumber>
    </recommendedName>
    <alternativeName>
        <fullName evidence="1">Cysteinyl-tRNA synthetase</fullName>
        <shortName evidence="1">CysRS</shortName>
    </alternativeName>
</protein>
<gene>
    <name evidence="1" type="primary">cysS</name>
    <name type="ordered locus">SPO2131</name>
</gene>
<keyword id="KW-0030">Aminoacyl-tRNA synthetase</keyword>
<keyword id="KW-0067">ATP-binding</keyword>
<keyword id="KW-0963">Cytoplasm</keyword>
<keyword id="KW-0436">Ligase</keyword>
<keyword id="KW-0479">Metal-binding</keyword>
<keyword id="KW-0547">Nucleotide-binding</keyword>
<keyword id="KW-0648">Protein biosynthesis</keyword>
<keyword id="KW-1185">Reference proteome</keyword>
<keyword id="KW-0862">Zinc</keyword>
<comment type="catalytic activity">
    <reaction evidence="1">
        <text>tRNA(Cys) + L-cysteine + ATP = L-cysteinyl-tRNA(Cys) + AMP + diphosphate</text>
        <dbReference type="Rhea" id="RHEA:17773"/>
        <dbReference type="Rhea" id="RHEA-COMP:9661"/>
        <dbReference type="Rhea" id="RHEA-COMP:9679"/>
        <dbReference type="ChEBI" id="CHEBI:30616"/>
        <dbReference type="ChEBI" id="CHEBI:33019"/>
        <dbReference type="ChEBI" id="CHEBI:35235"/>
        <dbReference type="ChEBI" id="CHEBI:78442"/>
        <dbReference type="ChEBI" id="CHEBI:78517"/>
        <dbReference type="ChEBI" id="CHEBI:456215"/>
        <dbReference type="EC" id="6.1.1.16"/>
    </reaction>
</comment>
<comment type="cofactor">
    <cofactor evidence="1">
        <name>Zn(2+)</name>
        <dbReference type="ChEBI" id="CHEBI:29105"/>
    </cofactor>
    <text evidence="1">Binds 1 zinc ion per subunit.</text>
</comment>
<comment type="subunit">
    <text evidence="1">Monomer.</text>
</comment>
<comment type="subcellular location">
    <subcellularLocation>
        <location evidence="1">Cytoplasm</location>
    </subcellularLocation>
</comment>
<comment type="similarity">
    <text evidence="1">Belongs to the class-I aminoacyl-tRNA synthetase family.</text>
</comment>
<dbReference type="EC" id="6.1.1.16" evidence="1"/>
<dbReference type="EMBL" id="CP000031">
    <property type="protein sequence ID" value="AAV95400.1"/>
    <property type="molecule type" value="Genomic_DNA"/>
</dbReference>
<dbReference type="RefSeq" id="WP_011047855.1">
    <property type="nucleotide sequence ID" value="NC_003911.12"/>
</dbReference>
<dbReference type="SMR" id="Q5LRJ6"/>
<dbReference type="STRING" id="246200.SPO2131"/>
<dbReference type="PaxDb" id="246200-SPO2131"/>
<dbReference type="KEGG" id="sil:SPO2131"/>
<dbReference type="eggNOG" id="COG0215">
    <property type="taxonomic scope" value="Bacteria"/>
</dbReference>
<dbReference type="HOGENOM" id="CLU_013528_0_1_5"/>
<dbReference type="OrthoDB" id="9815130at2"/>
<dbReference type="Proteomes" id="UP000001023">
    <property type="component" value="Chromosome"/>
</dbReference>
<dbReference type="GO" id="GO:0005829">
    <property type="term" value="C:cytosol"/>
    <property type="evidence" value="ECO:0007669"/>
    <property type="project" value="TreeGrafter"/>
</dbReference>
<dbReference type="GO" id="GO:0005524">
    <property type="term" value="F:ATP binding"/>
    <property type="evidence" value="ECO:0007669"/>
    <property type="project" value="UniProtKB-UniRule"/>
</dbReference>
<dbReference type="GO" id="GO:0004817">
    <property type="term" value="F:cysteine-tRNA ligase activity"/>
    <property type="evidence" value="ECO:0007669"/>
    <property type="project" value="UniProtKB-UniRule"/>
</dbReference>
<dbReference type="GO" id="GO:0008270">
    <property type="term" value="F:zinc ion binding"/>
    <property type="evidence" value="ECO:0007669"/>
    <property type="project" value="UniProtKB-UniRule"/>
</dbReference>
<dbReference type="GO" id="GO:0006423">
    <property type="term" value="P:cysteinyl-tRNA aminoacylation"/>
    <property type="evidence" value="ECO:0007669"/>
    <property type="project" value="UniProtKB-UniRule"/>
</dbReference>
<dbReference type="CDD" id="cd00672">
    <property type="entry name" value="CysRS_core"/>
    <property type="match status" value="1"/>
</dbReference>
<dbReference type="FunFam" id="3.40.50.620:FF:000068">
    <property type="entry name" value="Cysteine--tRNA ligase"/>
    <property type="match status" value="1"/>
</dbReference>
<dbReference type="Gene3D" id="1.20.120.1910">
    <property type="entry name" value="Cysteine-tRNA ligase, C-terminal anti-codon recognition domain"/>
    <property type="match status" value="1"/>
</dbReference>
<dbReference type="Gene3D" id="3.40.50.620">
    <property type="entry name" value="HUPs"/>
    <property type="match status" value="1"/>
</dbReference>
<dbReference type="HAMAP" id="MF_00041">
    <property type="entry name" value="Cys_tRNA_synth"/>
    <property type="match status" value="1"/>
</dbReference>
<dbReference type="InterPro" id="IPR015803">
    <property type="entry name" value="Cys-tRNA-ligase"/>
</dbReference>
<dbReference type="InterPro" id="IPR015273">
    <property type="entry name" value="Cys-tRNA-synt_Ia_DALR"/>
</dbReference>
<dbReference type="InterPro" id="IPR024909">
    <property type="entry name" value="Cys-tRNA/MSH_ligase"/>
</dbReference>
<dbReference type="InterPro" id="IPR014729">
    <property type="entry name" value="Rossmann-like_a/b/a_fold"/>
</dbReference>
<dbReference type="InterPro" id="IPR032678">
    <property type="entry name" value="tRNA-synt_1_cat_dom"/>
</dbReference>
<dbReference type="InterPro" id="IPR009080">
    <property type="entry name" value="tRNAsynth_Ia_anticodon-bd"/>
</dbReference>
<dbReference type="NCBIfam" id="TIGR00435">
    <property type="entry name" value="cysS"/>
    <property type="match status" value="1"/>
</dbReference>
<dbReference type="PANTHER" id="PTHR10890:SF3">
    <property type="entry name" value="CYSTEINE--TRNA LIGASE, CYTOPLASMIC"/>
    <property type="match status" value="1"/>
</dbReference>
<dbReference type="PANTHER" id="PTHR10890">
    <property type="entry name" value="CYSTEINYL-TRNA SYNTHETASE"/>
    <property type="match status" value="1"/>
</dbReference>
<dbReference type="Pfam" id="PF09190">
    <property type="entry name" value="DALR_2"/>
    <property type="match status" value="1"/>
</dbReference>
<dbReference type="Pfam" id="PF01406">
    <property type="entry name" value="tRNA-synt_1e"/>
    <property type="match status" value="1"/>
</dbReference>
<dbReference type="PRINTS" id="PR00983">
    <property type="entry name" value="TRNASYNTHCYS"/>
</dbReference>
<dbReference type="SMART" id="SM00840">
    <property type="entry name" value="DALR_2"/>
    <property type="match status" value="1"/>
</dbReference>
<dbReference type="SUPFAM" id="SSF47323">
    <property type="entry name" value="Anticodon-binding domain of a subclass of class I aminoacyl-tRNA synthetases"/>
    <property type="match status" value="1"/>
</dbReference>
<dbReference type="SUPFAM" id="SSF52374">
    <property type="entry name" value="Nucleotidylyl transferase"/>
    <property type="match status" value="1"/>
</dbReference>
<feature type="chain" id="PRO_0000159476" description="Cysteine--tRNA ligase">
    <location>
        <begin position="1"/>
        <end position="465"/>
    </location>
</feature>
<feature type="short sequence motif" description="'HIGH' region">
    <location>
        <begin position="32"/>
        <end position="42"/>
    </location>
</feature>
<feature type="short sequence motif" description="'KMSKS' region">
    <location>
        <begin position="271"/>
        <end position="275"/>
    </location>
</feature>
<feature type="binding site" evidence="1">
    <location>
        <position position="30"/>
    </location>
    <ligand>
        <name>Zn(2+)</name>
        <dbReference type="ChEBI" id="CHEBI:29105"/>
    </ligand>
</feature>
<feature type="binding site" evidence="1">
    <location>
        <position position="213"/>
    </location>
    <ligand>
        <name>Zn(2+)</name>
        <dbReference type="ChEBI" id="CHEBI:29105"/>
    </ligand>
</feature>
<feature type="binding site" evidence="1">
    <location>
        <position position="238"/>
    </location>
    <ligand>
        <name>Zn(2+)</name>
        <dbReference type="ChEBI" id="CHEBI:29105"/>
    </ligand>
</feature>
<feature type="binding site" evidence="1">
    <location>
        <position position="242"/>
    </location>
    <ligand>
        <name>Zn(2+)</name>
        <dbReference type="ChEBI" id="CHEBI:29105"/>
    </ligand>
</feature>
<feature type="binding site" evidence="1">
    <location>
        <position position="274"/>
    </location>
    <ligand>
        <name>ATP</name>
        <dbReference type="ChEBI" id="CHEBI:30616"/>
    </ligand>
</feature>
<reference key="1">
    <citation type="journal article" date="2004" name="Nature">
        <title>Genome sequence of Silicibacter pomeroyi reveals adaptations to the marine environment.</title>
        <authorList>
            <person name="Moran M.A."/>
            <person name="Buchan A."/>
            <person name="Gonzalez J.M."/>
            <person name="Heidelberg J.F."/>
            <person name="Whitman W.B."/>
            <person name="Kiene R.P."/>
            <person name="Henriksen J.R."/>
            <person name="King G.M."/>
            <person name="Belas R."/>
            <person name="Fuqua C."/>
            <person name="Brinkac L.M."/>
            <person name="Lewis M."/>
            <person name="Johri S."/>
            <person name="Weaver B."/>
            <person name="Pai G."/>
            <person name="Eisen J.A."/>
            <person name="Rahe E."/>
            <person name="Sheldon W.M."/>
            <person name="Ye W."/>
            <person name="Miller T.R."/>
            <person name="Carlton J."/>
            <person name="Rasko D.A."/>
            <person name="Paulsen I.T."/>
            <person name="Ren Q."/>
            <person name="Daugherty S.C."/>
            <person name="DeBoy R.T."/>
            <person name="Dodson R.J."/>
            <person name="Durkin A.S."/>
            <person name="Madupu R."/>
            <person name="Nelson W.C."/>
            <person name="Sullivan S.A."/>
            <person name="Rosovitz M.J."/>
            <person name="Haft D.H."/>
            <person name="Selengut J."/>
            <person name="Ward N."/>
        </authorList>
    </citation>
    <scope>NUCLEOTIDE SEQUENCE [LARGE SCALE GENOMIC DNA]</scope>
    <source>
        <strain>ATCC 700808 / DSM 15171 / DSS-3</strain>
    </source>
</reference>
<reference key="2">
    <citation type="journal article" date="2014" name="Stand. Genomic Sci.">
        <title>An updated genome annotation for the model marine bacterium Ruegeria pomeroyi DSS-3.</title>
        <authorList>
            <person name="Rivers A.R."/>
            <person name="Smith C.B."/>
            <person name="Moran M.A."/>
        </authorList>
    </citation>
    <scope>GENOME REANNOTATION</scope>
    <source>
        <strain>ATCC 700808 / DSM 15171 / DSS-3</strain>
    </source>
</reference>
<organism>
    <name type="scientific">Ruegeria pomeroyi (strain ATCC 700808 / DSM 15171 / DSS-3)</name>
    <name type="common">Silicibacter pomeroyi</name>
    <dbReference type="NCBI Taxonomy" id="246200"/>
    <lineage>
        <taxon>Bacteria</taxon>
        <taxon>Pseudomonadati</taxon>
        <taxon>Pseudomonadota</taxon>
        <taxon>Alphaproteobacteria</taxon>
        <taxon>Rhodobacterales</taxon>
        <taxon>Roseobacteraceae</taxon>
        <taxon>Ruegeria</taxon>
    </lineage>
</organism>
<evidence type="ECO:0000255" key="1">
    <source>
        <dbReference type="HAMAP-Rule" id="MF_00041"/>
    </source>
</evidence>